<gene>
    <name evidence="1" type="primary">rpsH</name>
    <name type="ordered locus">Fphi_0573</name>
</gene>
<comment type="function">
    <text evidence="1">One of the primary rRNA binding proteins, it binds directly to 16S rRNA central domain where it helps coordinate assembly of the platform of the 30S subunit.</text>
</comment>
<comment type="subunit">
    <text evidence="1">Part of the 30S ribosomal subunit. Contacts proteins S5 and S12.</text>
</comment>
<comment type="similarity">
    <text evidence="1">Belongs to the universal ribosomal protein uS8 family.</text>
</comment>
<reference key="1">
    <citation type="submission" date="2007-12" db="EMBL/GenBank/DDBJ databases">
        <title>Complete sequence of chromosome of Francisella philomiragia subsp. philomiragia ATCC 25017.</title>
        <authorList>
            <consortium name="US DOE Joint Genome Institute"/>
            <person name="Copeland A."/>
            <person name="Lucas S."/>
            <person name="Lapidus A."/>
            <person name="Barry K."/>
            <person name="Detter J.C."/>
            <person name="Glavina del Rio T."/>
            <person name="Hammon N."/>
            <person name="Israni S."/>
            <person name="Dalin E."/>
            <person name="Tice H."/>
            <person name="Pitluck S."/>
            <person name="Chain P."/>
            <person name="Malfatti S."/>
            <person name="Shin M."/>
            <person name="Vergez L."/>
            <person name="Schmutz J."/>
            <person name="Larimer F."/>
            <person name="Land M."/>
            <person name="Hauser L."/>
            <person name="Richardson P."/>
        </authorList>
    </citation>
    <scope>NUCLEOTIDE SEQUENCE [LARGE SCALE GENOMIC DNA]</scope>
    <source>
        <strain>ATCC 25017 / CCUG 19701 / FSC 153 / O#319-036</strain>
    </source>
</reference>
<organism>
    <name type="scientific">Francisella philomiragia subsp. philomiragia (strain ATCC 25017 / CCUG 19701 / FSC 153 / O#319-036)</name>
    <dbReference type="NCBI Taxonomy" id="484022"/>
    <lineage>
        <taxon>Bacteria</taxon>
        <taxon>Pseudomonadati</taxon>
        <taxon>Pseudomonadota</taxon>
        <taxon>Gammaproteobacteria</taxon>
        <taxon>Thiotrichales</taxon>
        <taxon>Francisellaceae</taxon>
        <taxon>Francisella</taxon>
    </lineage>
</organism>
<proteinExistence type="inferred from homology"/>
<protein>
    <recommendedName>
        <fullName evidence="1">Small ribosomal subunit protein uS8</fullName>
    </recommendedName>
    <alternativeName>
        <fullName evidence="2">30S ribosomal protein S8</fullName>
    </alternativeName>
</protein>
<keyword id="KW-0687">Ribonucleoprotein</keyword>
<keyword id="KW-0689">Ribosomal protein</keyword>
<keyword id="KW-0694">RNA-binding</keyword>
<keyword id="KW-0699">rRNA-binding</keyword>
<evidence type="ECO:0000255" key="1">
    <source>
        <dbReference type="HAMAP-Rule" id="MF_01302"/>
    </source>
</evidence>
<evidence type="ECO:0000305" key="2"/>
<dbReference type="EMBL" id="CP000937">
    <property type="protein sequence ID" value="ABZ86791.1"/>
    <property type="molecule type" value="Genomic_DNA"/>
</dbReference>
<dbReference type="SMR" id="B0U0X5"/>
<dbReference type="KEGG" id="fph:Fphi_0573"/>
<dbReference type="eggNOG" id="COG0096">
    <property type="taxonomic scope" value="Bacteria"/>
</dbReference>
<dbReference type="HOGENOM" id="CLU_098428_0_0_6"/>
<dbReference type="GO" id="GO:1990904">
    <property type="term" value="C:ribonucleoprotein complex"/>
    <property type="evidence" value="ECO:0007669"/>
    <property type="project" value="UniProtKB-KW"/>
</dbReference>
<dbReference type="GO" id="GO:0005840">
    <property type="term" value="C:ribosome"/>
    <property type="evidence" value="ECO:0007669"/>
    <property type="project" value="UniProtKB-KW"/>
</dbReference>
<dbReference type="GO" id="GO:0019843">
    <property type="term" value="F:rRNA binding"/>
    <property type="evidence" value="ECO:0007669"/>
    <property type="project" value="UniProtKB-UniRule"/>
</dbReference>
<dbReference type="GO" id="GO:0003735">
    <property type="term" value="F:structural constituent of ribosome"/>
    <property type="evidence" value="ECO:0007669"/>
    <property type="project" value="InterPro"/>
</dbReference>
<dbReference type="GO" id="GO:0006412">
    <property type="term" value="P:translation"/>
    <property type="evidence" value="ECO:0007669"/>
    <property type="project" value="UniProtKB-UniRule"/>
</dbReference>
<dbReference type="FunFam" id="3.30.1490.10:FF:000001">
    <property type="entry name" value="30S ribosomal protein S8"/>
    <property type="match status" value="1"/>
</dbReference>
<dbReference type="Gene3D" id="3.30.1370.30">
    <property type="match status" value="1"/>
</dbReference>
<dbReference type="Gene3D" id="3.30.1490.10">
    <property type="match status" value="1"/>
</dbReference>
<dbReference type="HAMAP" id="MF_01302_B">
    <property type="entry name" value="Ribosomal_uS8_B"/>
    <property type="match status" value="1"/>
</dbReference>
<dbReference type="InterPro" id="IPR000630">
    <property type="entry name" value="Ribosomal_uS8"/>
</dbReference>
<dbReference type="InterPro" id="IPR047863">
    <property type="entry name" value="Ribosomal_uS8_CS"/>
</dbReference>
<dbReference type="InterPro" id="IPR035987">
    <property type="entry name" value="Ribosomal_uS8_sf"/>
</dbReference>
<dbReference type="NCBIfam" id="NF001109">
    <property type="entry name" value="PRK00136.1"/>
    <property type="match status" value="1"/>
</dbReference>
<dbReference type="PANTHER" id="PTHR11758">
    <property type="entry name" value="40S RIBOSOMAL PROTEIN S15A"/>
    <property type="match status" value="1"/>
</dbReference>
<dbReference type="Pfam" id="PF00410">
    <property type="entry name" value="Ribosomal_S8"/>
    <property type="match status" value="1"/>
</dbReference>
<dbReference type="SUPFAM" id="SSF56047">
    <property type="entry name" value="Ribosomal protein S8"/>
    <property type="match status" value="1"/>
</dbReference>
<dbReference type="PROSITE" id="PS00053">
    <property type="entry name" value="RIBOSOMAL_S8"/>
    <property type="match status" value="1"/>
</dbReference>
<accession>B0U0X5</accession>
<name>RS8_FRAP2</name>
<feature type="chain" id="PRO_1000085923" description="Small ribosomal subunit protein uS8">
    <location>
        <begin position="1"/>
        <end position="132"/>
    </location>
</feature>
<sequence length="132" mass="14387">MSMQDPIADMFTRIRNGLSAEKEVVSVPFSKMKMEIANFLVNEGYIKGCSKGTTLAGHPSIEIELKYHAGAPVIEMIKRVSRPSLRIYKSHEELPKVYGGFGVAIISTSKGLVSDRKARDLGVGGEIIGYVA</sequence>